<sequence>METRAPYVLIGTFVLAAILAVFGFIYWLNNTGGIGPRTNYHVQFQGPVPGLLVGAGVLFNGIRVGEVAQLGLAPDNPRFVNATISVASATPVRADTRVGLDFQGLTGVPVVTLEGGMIVAKSGEPLTLIAEAGAGQSMTQAARDALRRVDSVLEDNSGPLKDTIANFKTFSDGLARNTGKLDGILAGLEKMTGGGAPAQKITYDLRTPQNLGPAAKTLSASLAIPEPTAVAMLQTQRMLFAPVGDNPGFADFLWADSIPKLVQARLIDSFENYDIAHAPLRTSDLGQADYQLLIDIRRFRIATDGETRVEIGLSARIVDKNGKVVASRLVETSEKLDKVEPAAAVAAFDAAFARIAKELIGWTVLAV</sequence>
<comment type="subcellular location">
    <subcellularLocation>
        <location evidence="2">Membrane</location>
        <topology evidence="2">Single-pass membrane protein</topology>
    </subcellularLocation>
</comment>
<name>Y6063_BRADU</name>
<evidence type="ECO:0000255" key="1"/>
<evidence type="ECO:0000305" key="2"/>
<feature type="chain" id="PRO_0000208812" description="Uncharacterized protein bll6063">
    <location>
        <begin position="1"/>
        <end position="367"/>
    </location>
</feature>
<feature type="transmembrane region" description="Helical" evidence="1">
    <location>
        <begin position="8"/>
        <end position="28"/>
    </location>
</feature>
<dbReference type="EMBL" id="BA000040">
    <property type="protein sequence ID" value="BAC51328.1"/>
    <property type="molecule type" value="Genomic_DNA"/>
</dbReference>
<dbReference type="EMBL" id="M86805">
    <property type="protein sequence ID" value="AAA26208.1"/>
    <property type="molecule type" value="Genomic_DNA"/>
</dbReference>
<dbReference type="PIR" id="A42371">
    <property type="entry name" value="A42371"/>
</dbReference>
<dbReference type="RefSeq" id="NP_772703.1">
    <property type="nucleotide sequence ID" value="NC_004463.1"/>
</dbReference>
<dbReference type="RefSeq" id="WP_011088804.1">
    <property type="nucleotide sequence ID" value="NC_004463.1"/>
</dbReference>
<dbReference type="SMR" id="P29285"/>
<dbReference type="STRING" id="224911.AAV28_27845"/>
<dbReference type="EnsemblBacteria" id="BAC51328">
    <property type="protein sequence ID" value="BAC51328"/>
    <property type="gene ID" value="BAC51328"/>
</dbReference>
<dbReference type="GeneID" id="46493057"/>
<dbReference type="KEGG" id="bja:bll6063"/>
<dbReference type="PATRIC" id="fig|224911.44.peg.6016"/>
<dbReference type="eggNOG" id="COG1463">
    <property type="taxonomic scope" value="Bacteria"/>
</dbReference>
<dbReference type="eggNOG" id="COG3218">
    <property type="taxonomic scope" value="Bacteria"/>
</dbReference>
<dbReference type="HOGENOM" id="CLU_754154_0_0_5"/>
<dbReference type="InParanoid" id="P29285"/>
<dbReference type="OrthoDB" id="9808689at2"/>
<dbReference type="PhylomeDB" id="P29285"/>
<dbReference type="Proteomes" id="UP000002526">
    <property type="component" value="Chromosome"/>
</dbReference>
<dbReference type="GO" id="GO:0016020">
    <property type="term" value="C:membrane"/>
    <property type="evidence" value="ECO:0007669"/>
    <property type="project" value="UniProtKB-SubCell"/>
</dbReference>
<dbReference type="Gene3D" id="3.40.50.10610">
    <property type="entry name" value="ABC-type transport auxiliary lipoprotein component"/>
    <property type="match status" value="1"/>
</dbReference>
<dbReference type="InterPro" id="IPR005586">
    <property type="entry name" value="ABC_trans_aux"/>
</dbReference>
<dbReference type="InterPro" id="IPR003399">
    <property type="entry name" value="Mce/MlaD"/>
</dbReference>
<dbReference type="PANTHER" id="PTHR36698">
    <property type="entry name" value="BLL5892 PROTEIN"/>
    <property type="match status" value="1"/>
</dbReference>
<dbReference type="PANTHER" id="PTHR36698:SF2">
    <property type="entry name" value="MCE_MLAD DOMAIN-CONTAINING PROTEIN"/>
    <property type="match status" value="1"/>
</dbReference>
<dbReference type="Pfam" id="PF03886">
    <property type="entry name" value="ABC_trans_aux"/>
    <property type="match status" value="1"/>
</dbReference>
<dbReference type="Pfam" id="PF02470">
    <property type="entry name" value="MlaD"/>
    <property type="match status" value="1"/>
</dbReference>
<dbReference type="SUPFAM" id="SSF159594">
    <property type="entry name" value="XCC0632-like"/>
    <property type="match status" value="1"/>
</dbReference>
<reference key="1">
    <citation type="journal article" date="2002" name="DNA Res.">
        <title>Complete genomic sequence of nitrogen-fixing symbiotic bacterium Bradyrhizobium japonicum USDA110.</title>
        <authorList>
            <person name="Kaneko T."/>
            <person name="Nakamura Y."/>
            <person name="Sato S."/>
            <person name="Minamisawa K."/>
            <person name="Uchiumi T."/>
            <person name="Sasamoto S."/>
            <person name="Watanabe A."/>
            <person name="Idesawa K."/>
            <person name="Iriguchi M."/>
            <person name="Kawashima K."/>
            <person name="Kohara M."/>
            <person name="Matsumoto M."/>
            <person name="Shimpo S."/>
            <person name="Tsuruoka H."/>
            <person name="Wada T."/>
            <person name="Yamada M."/>
            <person name="Tabata S."/>
        </authorList>
    </citation>
    <scope>NUCLEOTIDE SEQUENCE [LARGE SCALE GENOMIC DNA]</scope>
    <source>
        <strain>JCM 10833 / BCRC 13528 / IAM 13628 / NBRC 14792 / USDA 110</strain>
    </source>
</reference>
<reference key="2">
    <citation type="journal article" date="1992" name="J. Bacteriol.">
        <title>Characterization of a fixLJ-regulated Bradyrhizobium japonicum gene sharing similarity with the Escherichia coli fnr and Rhizobium meliloti fixK genes.</title>
        <authorList>
            <person name="Anthamatten D."/>
            <person name="Scherb B."/>
            <person name="Hennecke H."/>
        </authorList>
    </citation>
    <scope>NUCLEOTIDE SEQUENCE [GENOMIC DNA] OF 188-367</scope>
    <source>
        <strain>USDA 110spc4</strain>
    </source>
</reference>
<keyword id="KW-0472">Membrane</keyword>
<keyword id="KW-1185">Reference proteome</keyword>
<keyword id="KW-0812">Transmembrane</keyword>
<keyword id="KW-1133">Transmembrane helix</keyword>
<proteinExistence type="predicted"/>
<organism>
    <name type="scientific">Bradyrhizobium diazoefficiens (strain JCM 10833 / BCRC 13528 / IAM 13628 / NBRC 14792 / USDA 110)</name>
    <dbReference type="NCBI Taxonomy" id="224911"/>
    <lineage>
        <taxon>Bacteria</taxon>
        <taxon>Pseudomonadati</taxon>
        <taxon>Pseudomonadota</taxon>
        <taxon>Alphaproteobacteria</taxon>
        <taxon>Hyphomicrobiales</taxon>
        <taxon>Nitrobacteraceae</taxon>
        <taxon>Bradyrhizobium</taxon>
    </lineage>
</organism>
<accession>P29285</accession>
<protein>
    <recommendedName>
        <fullName>Uncharacterized protein bll6063</fullName>
    </recommendedName>
</protein>
<gene>
    <name type="ordered locus">bll6063</name>
</gene>